<keyword id="KW-1185">Reference proteome</keyword>
<keyword id="KW-0808">Transferase</keyword>
<dbReference type="EC" id="2.5.1.18"/>
<dbReference type="EMBL" id="AF071161">
    <property type="protein sequence ID" value="AAC79997.1"/>
    <property type="molecule type" value="mRNA"/>
</dbReference>
<dbReference type="EMBL" id="AAAB01008880">
    <property type="protein sequence ID" value="EAL40657.3"/>
    <property type="molecule type" value="Genomic_DNA"/>
</dbReference>
<dbReference type="EMBL" id="AY063775">
    <property type="protein sequence ID" value="AAL59657.1"/>
    <property type="molecule type" value="Genomic_DNA"/>
</dbReference>
<dbReference type="SMR" id="O76483"/>
<dbReference type="FunCoup" id="O76483">
    <property type="interactions" value="146"/>
</dbReference>
<dbReference type="STRING" id="7165.O76483"/>
<dbReference type="PaxDb" id="7165-AGAP004163-PB"/>
<dbReference type="EnsemblMetazoa" id="AGAP004163-RB">
    <property type="protein sequence ID" value="AGAP004163-PB"/>
    <property type="gene ID" value="AGAP004163"/>
</dbReference>
<dbReference type="GeneID" id="1273987"/>
<dbReference type="KEGG" id="aga:1273987"/>
<dbReference type="CTD" id="41512"/>
<dbReference type="VEuPathDB" id="VectorBase:AGAMI1_010233"/>
<dbReference type="VEuPathDB" id="VectorBase:AGAP004163"/>
<dbReference type="eggNOG" id="KOG0867">
    <property type="taxonomic scope" value="Eukaryota"/>
</dbReference>
<dbReference type="HOGENOM" id="CLU_011226_2_1_1"/>
<dbReference type="InParanoid" id="O76483"/>
<dbReference type="OMA" id="EDGTCLW"/>
<dbReference type="PhylomeDB" id="O76483"/>
<dbReference type="Proteomes" id="UP000007062">
    <property type="component" value="Chromosome 2R"/>
</dbReference>
<dbReference type="GO" id="GO:0005576">
    <property type="term" value="C:extracellular region"/>
    <property type="evidence" value="ECO:0000250"/>
    <property type="project" value="UniProtKB"/>
</dbReference>
<dbReference type="GO" id="GO:0004364">
    <property type="term" value="F:glutathione transferase activity"/>
    <property type="evidence" value="ECO:0000250"/>
    <property type="project" value="UniProtKB"/>
</dbReference>
<dbReference type="GO" id="GO:0006749">
    <property type="term" value="P:glutathione metabolic process"/>
    <property type="evidence" value="ECO:0000250"/>
    <property type="project" value="UniProtKB"/>
</dbReference>
<dbReference type="CDD" id="cd03177">
    <property type="entry name" value="GST_C_Delta_Epsilon"/>
    <property type="match status" value="1"/>
</dbReference>
<dbReference type="CDD" id="cd03045">
    <property type="entry name" value="GST_N_Delta_Epsilon"/>
    <property type="match status" value="1"/>
</dbReference>
<dbReference type="FunFam" id="3.40.30.10:FF:000034">
    <property type="entry name" value="glutathione S-transferase 1"/>
    <property type="match status" value="1"/>
</dbReference>
<dbReference type="FunFam" id="1.20.1050.10:FF:000007">
    <property type="entry name" value="Glutathione S-transferase 1-1"/>
    <property type="match status" value="1"/>
</dbReference>
<dbReference type="Gene3D" id="1.20.1050.10">
    <property type="match status" value="1"/>
</dbReference>
<dbReference type="Gene3D" id="3.40.30.10">
    <property type="entry name" value="Glutaredoxin"/>
    <property type="match status" value="1"/>
</dbReference>
<dbReference type="InterPro" id="IPR010987">
    <property type="entry name" value="Glutathione-S-Trfase_C-like"/>
</dbReference>
<dbReference type="InterPro" id="IPR036282">
    <property type="entry name" value="Glutathione-S-Trfase_C_sf"/>
</dbReference>
<dbReference type="InterPro" id="IPR040079">
    <property type="entry name" value="Glutathione_S-Trfase"/>
</dbReference>
<dbReference type="InterPro" id="IPR004045">
    <property type="entry name" value="Glutathione_S-Trfase_N"/>
</dbReference>
<dbReference type="InterPro" id="IPR036249">
    <property type="entry name" value="Thioredoxin-like_sf"/>
</dbReference>
<dbReference type="PANTHER" id="PTHR43969">
    <property type="entry name" value="GLUTATHIONE S TRANSFERASE D10, ISOFORM A-RELATED"/>
    <property type="match status" value="1"/>
</dbReference>
<dbReference type="PANTHER" id="PTHR43969:SF2">
    <property type="entry name" value="GLUTATHIONE S TRANSFERASE D11, ISOFORM B"/>
    <property type="match status" value="1"/>
</dbReference>
<dbReference type="Pfam" id="PF13410">
    <property type="entry name" value="GST_C_2"/>
    <property type="match status" value="1"/>
</dbReference>
<dbReference type="Pfam" id="PF02798">
    <property type="entry name" value="GST_N"/>
    <property type="match status" value="1"/>
</dbReference>
<dbReference type="SFLD" id="SFLDS00019">
    <property type="entry name" value="Glutathione_Transferase_(cytos"/>
    <property type="match status" value="1"/>
</dbReference>
<dbReference type="SFLD" id="SFLDG01153">
    <property type="entry name" value="Main.4:_Theta-like"/>
    <property type="match status" value="1"/>
</dbReference>
<dbReference type="SUPFAM" id="SSF47616">
    <property type="entry name" value="GST C-terminal domain-like"/>
    <property type="match status" value="1"/>
</dbReference>
<dbReference type="SUPFAM" id="SSF52833">
    <property type="entry name" value="Thioredoxin-like"/>
    <property type="match status" value="1"/>
</dbReference>
<dbReference type="PROSITE" id="PS50405">
    <property type="entry name" value="GST_CTER"/>
    <property type="match status" value="1"/>
</dbReference>
<dbReference type="PROSITE" id="PS50404">
    <property type="entry name" value="GST_NTER"/>
    <property type="match status" value="1"/>
</dbReference>
<gene>
    <name evidence="4" type="primary">GstD7</name>
    <name evidence="6" type="synonym">GST1-7</name>
    <name type="ORF">AGAP004163</name>
</gene>
<comment type="function">
    <text evidence="2">Conjugation of reduced glutathione to a wide number of exogenous and endogenous hydrophobic electrophiles.</text>
</comment>
<comment type="catalytic activity">
    <reaction evidence="3">
        <text>RX + glutathione = an S-substituted glutathione + a halide anion + H(+)</text>
        <dbReference type="Rhea" id="RHEA:16437"/>
        <dbReference type="ChEBI" id="CHEBI:15378"/>
        <dbReference type="ChEBI" id="CHEBI:16042"/>
        <dbReference type="ChEBI" id="CHEBI:17792"/>
        <dbReference type="ChEBI" id="CHEBI:57925"/>
        <dbReference type="ChEBI" id="CHEBI:90779"/>
        <dbReference type="EC" id="2.5.1.18"/>
    </reaction>
</comment>
<comment type="subunit">
    <text evidence="2">Homodimer.</text>
</comment>
<comment type="similarity">
    <text evidence="3">Belongs to the GST superfamily. Theta family.</text>
</comment>
<evidence type="ECO:0000250" key="1"/>
<evidence type="ECO:0000250" key="2">
    <source>
        <dbReference type="UniProtKB" id="P30711"/>
    </source>
</evidence>
<evidence type="ECO:0000250" key="3">
    <source>
        <dbReference type="UniProtKB" id="Q93113"/>
    </source>
</evidence>
<evidence type="ECO:0000303" key="4">
    <source>
    </source>
</evidence>
<evidence type="ECO:0000305" key="5"/>
<evidence type="ECO:0000312" key="6">
    <source>
        <dbReference type="EMBL" id="AAC79997.1"/>
    </source>
</evidence>
<evidence type="ECO:0000312" key="7">
    <source>
        <dbReference type="EMBL" id="AAL59657.1"/>
    </source>
</evidence>
<proteinExistence type="evidence at transcript level"/>
<protein>
    <recommendedName>
        <fullName>Glutathione S-transferase D7</fullName>
        <ecNumber>2.5.1.18</ecNumber>
    </recommendedName>
    <alternativeName>
        <fullName>Aggst1-7</fullName>
    </alternativeName>
    <alternativeName>
        <fullName>GST class-theta</fullName>
    </alternativeName>
    <alternativeName>
        <fullName>Gst1-beta</fullName>
    </alternativeName>
</protein>
<name>GSTT7_ANOGA</name>
<organism>
    <name type="scientific">Anopheles gambiae</name>
    <name type="common">African malaria mosquito</name>
    <dbReference type="NCBI Taxonomy" id="7165"/>
    <lineage>
        <taxon>Eukaryota</taxon>
        <taxon>Metazoa</taxon>
        <taxon>Ecdysozoa</taxon>
        <taxon>Arthropoda</taxon>
        <taxon>Hexapoda</taxon>
        <taxon>Insecta</taxon>
        <taxon>Pterygota</taxon>
        <taxon>Neoptera</taxon>
        <taxon>Endopterygota</taxon>
        <taxon>Diptera</taxon>
        <taxon>Nematocera</taxon>
        <taxon>Culicoidea</taxon>
        <taxon>Culicidae</taxon>
        <taxon>Anophelinae</taxon>
        <taxon>Anopheles</taxon>
    </lineage>
</organism>
<reference evidence="6" key="1">
    <citation type="journal article" date="1998" name="Proc. Natl. Acad. Sci. U.S.A.">
        <title>The role of alternative mRNA splicing in generating heterogeneity within the Anopheles gambiae class I glutathione S-transferase family.</title>
        <authorList>
            <person name="Ranson H."/>
            <person name="Collins F.H."/>
            <person name="Hemingway J."/>
        </authorList>
    </citation>
    <scope>NUCLEOTIDE SEQUENCE [MRNA]</scope>
    <source>
        <strain evidence="6">ZAN/U</strain>
    </source>
</reference>
<reference key="2">
    <citation type="journal article" date="2002" name="Science">
        <title>The genome sequence of the malaria mosquito Anopheles gambiae.</title>
        <authorList>
            <person name="Holt R.A."/>
            <person name="Subramanian G.M."/>
            <person name="Halpern A."/>
            <person name="Sutton G.G."/>
            <person name="Charlab R."/>
            <person name="Nusskern D.R."/>
            <person name="Wincker P."/>
            <person name="Clark A.G."/>
            <person name="Ribeiro J.M.C."/>
            <person name="Wides R."/>
            <person name="Salzberg S.L."/>
            <person name="Loftus B.J."/>
            <person name="Yandell M.D."/>
            <person name="Majoros W.H."/>
            <person name="Rusch D.B."/>
            <person name="Lai Z."/>
            <person name="Kraft C.L."/>
            <person name="Abril J.F."/>
            <person name="Anthouard V."/>
            <person name="Arensburger P."/>
            <person name="Atkinson P.W."/>
            <person name="Baden H."/>
            <person name="de Berardinis V."/>
            <person name="Baldwin D."/>
            <person name="Benes V."/>
            <person name="Biedler J."/>
            <person name="Blass C."/>
            <person name="Bolanos R."/>
            <person name="Boscus D."/>
            <person name="Barnstead M."/>
            <person name="Cai S."/>
            <person name="Center A."/>
            <person name="Chaturverdi K."/>
            <person name="Christophides G.K."/>
            <person name="Chrystal M.A.M."/>
            <person name="Clamp M."/>
            <person name="Cravchik A."/>
            <person name="Curwen V."/>
            <person name="Dana A."/>
            <person name="Delcher A."/>
            <person name="Dew I."/>
            <person name="Evans C.A."/>
            <person name="Flanigan M."/>
            <person name="Grundschober-Freimoser A."/>
            <person name="Friedli L."/>
            <person name="Gu Z."/>
            <person name="Guan P."/>
            <person name="Guigo R."/>
            <person name="Hillenmeyer M.E."/>
            <person name="Hladun S.L."/>
            <person name="Hogan J.R."/>
            <person name="Hong Y.S."/>
            <person name="Hoover J."/>
            <person name="Jaillon O."/>
            <person name="Ke Z."/>
            <person name="Kodira C.D."/>
            <person name="Kokoza E."/>
            <person name="Koutsos A."/>
            <person name="Letunic I."/>
            <person name="Levitsky A.A."/>
            <person name="Liang Y."/>
            <person name="Lin J.-J."/>
            <person name="Lobo N.F."/>
            <person name="Lopez J.R."/>
            <person name="Malek J.A."/>
            <person name="McIntosh T.C."/>
            <person name="Meister S."/>
            <person name="Miller J.R."/>
            <person name="Mobarry C."/>
            <person name="Mongin E."/>
            <person name="Murphy S.D."/>
            <person name="O'Brochta D.A."/>
            <person name="Pfannkoch C."/>
            <person name="Qi R."/>
            <person name="Regier M.A."/>
            <person name="Remington K."/>
            <person name="Shao H."/>
            <person name="Sharakhova M.V."/>
            <person name="Sitter C.D."/>
            <person name="Shetty J."/>
            <person name="Smith T.J."/>
            <person name="Strong R."/>
            <person name="Sun J."/>
            <person name="Thomasova D."/>
            <person name="Ton L.Q."/>
            <person name="Topalis P."/>
            <person name="Tu Z.J."/>
            <person name="Unger M.F."/>
            <person name="Walenz B."/>
            <person name="Wang A.H."/>
            <person name="Wang J."/>
            <person name="Wang M."/>
            <person name="Wang X."/>
            <person name="Woodford K.J."/>
            <person name="Wortman J.R."/>
            <person name="Wu M."/>
            <person name="Yao A."/>
            <person name="Zdobnov E.M."/>
            <person name="Zhang H."/>
            <person name="Zhao Q."/>
            <person name="Zhao S."/>
            <person name="Zhu S.C."/>
            <person name="Zhimulev I."/>
            <person name="Coluzzi M."/>
            <person name="della Torre A."/>
            <person name="Roth C.W."/>
            <person name="Louis C."/>
            <person name="Kalush F."/>
            <person name="Mural R.J."/>
            <person name="Myers E.W."/>
            <person name="Adams M.D."/>
            <person name="Smith H.O."/>
            <person name="Broder S."/>
            <person name="Gardner M.J."/>
            <person name="Fraser C.M."/>
            <person name="Birney E."/>
            <person name="Bork P."/>
            <person name="Brey P.T."/>
            <person name="Venter J.C."/>
            <person name="Weissenbach J."/>
            <person name="Kafatos F.C."/>
            <person name="Collins F.H."/>
            <person name="Hoffman S.L."/>
        </authorList>
    </citation>
    <scope>NUCLEOTIDE SEQUENCE [LARGE SCALE GENOMIC DNA]</scope>
    <source>
        <strain>PEST</strain>
    </source>
</reference>
<reference evidence="5 7" key="3">
    <citation type="submission" date="2001-11" db="EMBL/GenBank/DDBJ databases">
        <title>Analysis of a GST promoter in the malaria mosquito Anopheles gambiae.</title>
        <authorList>
            <person name="Ortelli F."/>
            <person name="Hemingway J."/>
        </authorList>
    </citation>
    <scope>NUCLEOTIDE SEQUENCE [GENOMIC DNA] OF 1-27</scope>
    <source>
        <strain evidence="7">Zands</strain>
    </source>
</reference>
<accession>O76483</accession>
<accession>A0NDD6</accession>
<accession>Q7QB62</accession>
<accession>Q8WQM2</accession>
<sequence>MTPVLYYLPPSPPCRSVLLLAKMIGVELELKALNVMEGEQLKPDFVELNPQHCIPTLDDHGLVLWESRVILAYLVSAYGKDENLYPKDFRSRAIVDQRLHFDLGTLYQRVVDYYFPTIQLGAHLDQTKKAKLAEALGWFEAMLKQYQWSAANHFTIADIALCVTVSQIEAFQFDLHPYPRVRAWLQKCKDELQGHGYKEINETGAETLAGLFRSKLKQ</sequence>
<feature type="chain" id="PRO_0000284749" description="Glutathione S-transferase D7">
    <location>
        <begin position="1"/>
        <end position="218"/>
    </location>
</feature>
<feature type="domain" description="GST N-terminal">
    <location>
        <begin position="1"/>
        <end position="82"/>
    </location>
</feature>
<feature type="domain" description="GST C-terminal">
    <location>
        <begin position="88"/>
        <end position="207"/>
    </location>
</feature>
<feature type="binding site" evidence="1">
    <location>
        <position position="11"/>
    </location>
    <ligand>
        <name>glutathione</name>
        <dbReference type="ChEBI" id="CHEBI:57925"/>
    </ligand>
</feature>
<feature type="binding site" evidence="1">
    <location>
        <begin position="52"/>
        <end position="54"/>
    </location>
    <ligand>
        <name>glutathione</name>
        <dbReference type="ChEBI" id="CHEBI:57925"/>
    </ligand>
</feature>
<feature type="binding site" evidence="1">
    <location>
        <begin position="66"/>
        <end position="68"/>
    </location>
    <ligand>
        <name>glutathione</name>
        <dbReference type="ChEBI" id="CHEBI:57925"/>
    </ligand>
</feature>